<name>HCS2_ARATH</name>
<sequence>MDIDASCSLVLYGKSSVETDTATRLKNNNVLKLPDNSKVSIFLQSEIKNLVRDDDSSFNLSLFMNSISTHRFGRFLIWSPYLSSTHDVVSHNFSEIPVGSVCVSDIQLKGRGRTKNVWESPKGCLMYSFTLEMEDGRVVPLIQYVVSLAVTEAVKDVCDKKGLSYNDVKIKWPNDLYLNGLKIGGILCTSTYRSRKFLVSVGVGLNVDNEQPTTCLNAVLKDVCPPSNLLKREEILGAFFKKFENFFDLFMEQGFKSLEELYYRTWLHSGQRVIAEEKNEDQVVQNVVTIQGLTSSGYLLAIGDDNVMYELHPDGNSFDFFKGLVRRKL</sequence>
<evidence type="ECO:0000250" key="1"/>
<evidence type="ECO:0000255" key="2">
    <source>
        <dbReference type="PROSITE-ProRule" id="PRU01067"/>
    </source>
</evidence>
<evidence type="ECO:0000269" key="3">
    <source>
    </source>
</evidence>
<evidence type="ECO:0000269" key="4">
    <source>
    </source>
</evidence>
<evidence type="ECO:0000303" key="5">
    <source>
    </source>
</evidence>
<evidence type="ECO:0000305" key="6"/>
<proteinExistence type="evidence at transcript level"/>
<comment type="function">
    <text evidence="4">Seems to have no or limited implication in biotin-dependent carboxylase biotinylation in planta.</text>
</comment>
<comment type="subcellular location">
    <subcellularLocation>
        <location evidence="1">Cytoplasm</location>
    </subcellularLocation>
</comment>
<comment type="alternative products">
    <event type="alternative splicing"/>
    <isoform>
        <id>F4I4W2-1</id>
        <name>1</name>
        <sequence type="displayed"/>
    </isoform>
    <isoform>
        <id>F4I4W2-2</id>
        <name>2</name>
        <sequence type="described" ref="VSP_053917 VSP_053918"/>
    </isoform>
</comment>
<comment type="tissue specificity">
    <text evidence="3">Highly expressed in seeds. Expressed in roots, leaves, stems, flowers and siliques.</text>
</comment>
<comment type="disruption phenotype">
    <text evidence="4">No visible phenotype under normal growth conditions.</text>
</comment>
<comment type="similarity">
    <text evidence="6">Belongs to the biotin--protein ligase family.</text>
</comment>
<comment type="sequence caution" evidence="6">
    <conflict type="erroneous gene model prediction">
        <sequence resource="EMBL-CDS" id="AAF19230"/>
    </conflict>
</comment>
<dbReference type="EC" id="6.3.4.-"/>
<dbReference type="EMBL" id="AF414938">
    <property type="protein sequence ID" value="AAL93109.1"/>
    <property type="molecule type" value="mRNA"/>
</dbReference>
<dbReference type="EMBL" id="AF414941">
    <property type="protein sequence ID" value="AAL93112.1"/>
    <property type="molecule type" value="mRNA"/>
</dbReference>
<dbReference type="EMBL" id="AC007505">
    <property type="protein sequence ID" value="AAF19230.1"/>
    <property type="status" value="ALT_SEQ"/>
    <property type="molecule type" value="Genomic_DNA"/>
</dbReference>
<dbReference type="EMBL" id="CP002684">
    <property type="protein sequence ID" value="AEE31896.1"/>
    <property type="molecule type" value="Genomic_DNA"/>
</dbReference>
<dbReference type="EMBL" id="CP002684">
    <property type="protein sequence ID" value="AEE31897.1"/>
    <property type="molecule type" value="Genomic_DNA"/>
</dbReference>
<dbReference type="EMBL" id="CP002684">
    <property type="protein sequence ID" value="ANM58157.1"/>
    <property type="molecule type" value="Genomic_DNA"/>
</dbReference>
<dbReference type="EMBL" id="CP002684">
    <property type="protein sequence ID" value="ANM58160.1"/>
    <property type="molecule type" value="Genomic_DNA"/>
</dbReference>
<dbReference type="PIR" id="G86490">
    <property type="entry name" value="G86490"/>
</dbReference>
<dbReference type="RefSeq" id="NP_001320613.1">
    <molecule id="F4I4W2-2"/>
    <property type="nucleotide sequence ID" value="NM_001333189.1"/>
</dbReference>
<dbReference type="RefSeq" id="NP_001320616.1">
    <molecule id="F4I4W2-2"/>
    <property type="nucleotide sequence ID" value="NM_001333190.1"/>
</dbReference>
<dbReference type="RefSeq" id="NP_850957.1">
    <molecule id="F4I4W2-1"/>
    <property type="nucleotide sequence ID" value="NM_180626.2"/>
</dbReference>
<dbReference type="RefSeq" id="NP_850958.1">
    <molecule id="F4I4W2-2"/>
    <property type="nucleotide sequence ID" value="NM_180627.2"/>
</dbReference>
<dbReference type="SMR" id="F4I4W2"/>
<dbReference type="FunCoup" id="F4I4W2">
    <property type="interactions" value="1"/>
</dbReference>
<dbReference type="STRING" id="3702.F4I4W2"/>
<dbReference type="PaxDb" id="3702-AT1G37150.2"/>
<dbReference type="ProteomicsDB" id="247352">
    <molecule id="F4I4W2-1"/>
</dbReference>
<dbReference type="EnsemblPlants" id="AT1G37150.2">
    <molecule id="F4I4W2-1"/>
    <property type="protein sequence ID" value="AT1G37150.2"/>
    <property type="gene ID" value="AT1G37150"/>
</dbReference>
<dbReference type="EnsemblPlants" id="AT1G37150.3">
    <molecule id="F4I4W2-2"/>
    <property type="protein sequence ID" value="AT1G37150.3"/>
    <property type="gene ID" value="AT1G37150"/>
</dbReference>
<dbReference type="EnsemblPlants" id="AT1G37150.7">
    <molecule id="F4I4W2-2"/>
    <property type="protein sequence ID" value="AT1G37150.7"/>
    <property type="gene ID" value="AT1G37150"/>
</dbReference>
<dbReference type="EnsemblPlants" id="AT1G37150.8">
    <molecule id="F4I4W2-2"/>
    <property type="protein sequence ID" value="AT1G37150.8"/>
    <property type="gene ID" value="AT1G37150"/>
</dbReference>
<dbReference type="GeneID" id="840632"/>
<dbReference type="Gramene" id="AT1G37150.2">
    <molecule id="F4I4W2-1"/>
    <property type="protein sequence ID" value="AT1G37150.2"/>
    <property type="gene ID" value="AT1G37150"/>
</dbReference>
<dbReference type="Gramene" id="AT1G37150.3">
    <molecule id="F4I4W2-2"/>
    <property type="protein sequence ID" value="AT1G37150.3"/>
    <property type="gene ID" value="AT1G37150"/>
</dbReference>
<dbReference type="Gramene" id="AT1G37150.7">
    <molecule id="F4I4W2-2"/>
    <property type="protein sequence ID" value="AT1G37150.7"/>
    <property type="gene ID" value="AT1G37150"/>
</dbReference>
<dbReference type="Gramene" id="AT1G37150.8">
    <molecule id="F4I4W2-2"/>
    <property type="protein sequence ID" value="AT1G37150.8"/>
    <property type="gene ID" value="AT1G37150"/>
</dbReference>
<dbReference type="KEGG" id="ath:AT1G37150"/>
<dbReference type="Araport" id="AT1G37150"/>
<dbReference type="TAIR" id="AT1G37150">
    <property type="gene designation" value="HCS2"/>
</dbReference>
<dbReference type="eggNOG" id="KOG1536">
    <property type="taxonomic scope" value="Eukaryota"/>
</dbReference>
<dbReference type="InParanoid" id="F4I4W2"/>
<dbReference type="OMA" id="MECDASC"/>
<dbReference type="PRO" id="PR:F4I4W2"/>
<dbReference type="Proteomes" id="UP000006548">
    <property type="component" value="Chromosome 1"/>
</dbReference>
<dbReference type="ExpressionAtlas" id="F4I4W2">
    <property type="expression patterns" value="baseline and differential"/>
</dbReference>
<dbReference type="GO" id="GO:0005737">
    <property type="term" value="C:cytoplasm"/>
    <property type="evidence" value="ECO:0007669"/>
    <property type="project" value="UniProtKB-SubCell"/>
</dbReference>
<dbReference type="GO" id="GO:0004077">
    <property type="term" value="F:biotin--[biotin carboxyl-carrier protein] ligase activity"/>
    <property type="evidence" value="ECO:0007669"/>
    <property type="project" value="InterPro"/>
</dbReference>
<dbReference type="GO" id="GO:0036211">
    <property type="term" value="P:protein modification process"/>
    <property type="evidence" value="ECO:0007669"/>
    <property type="project" value="InterPro"/>
</dbReference>
<dbReference type="CDD" id="cd16442">
    <property type="entry name" value="BPL"/>
    <property type="match status" value="1"/>
</dbReference>
<dbReference type="FunFam" id="3.30.930.10:FF:000181">
    <property type="entry name" value="Holocarboxylase synthetase 2"/>
    <property type="match status" value="1"/>
</dbReference>
<dbReference type="Gene3D" id="3.30.930.10">
    <property type="entry name" value="Bira Bifunctional Protein, Domain 2"/>
    <property type="match status" value="1"/>
</dbReference>
<dbReference type="InterPro" id="IPR045864">
    <property type="entry name" value="aa-tRNA-synth_II/BPL/LPL"/>
</dbReference>
<dbReference type="InterPro" id="IPR004408">
    <property type="entry name" value="Biotin_CoA_COase_ligase"/>
</dbReference>
<dbReference type="InterPro" id="IPR003142">
    <property type="entry name" value="BPL_C"/>
</dbReference>
<dbReference type="InterPro" id="IPR004143">
    <property type="entry name" value="BPL_LPL_catalytic"/>
</dbReference>
<dbReference type="NCBIfam" id="TIGR00121">
    <property type="entry name" value="birA_ligase"/>
    <property type="match status" value="1"/>
</dbReference>
<dbReference type="PANTHER" id="PTHR12835">
    <property type="entry name" value="BIOTIN PROTEIN LIGASE"/>
    <property type="match status" value="1"/>
</dbReference>
<dbReference type="PANTHER" id="PTHR12835:SF5">
    <property type="entry name" value="BIOTIN--PROTEIN LIGASE"/>
    <property type="match status" value="1"/>
</dbReference>
<dbReference type="Pfam" id="PF02237">
    <property type="entry name" value="BPL_C"/>
    <property type="match status" value="1"/>
</dbReference>
<dbReference type="Pfam" id="PF03099">
    <property type="entry name" value="BPL_LplA_LipB"/>
    <property type="match status" value="1"/>
</dbReference>
<dbReference type="SUPFAM" id="SSF55681">
    <property type="entry name" value="Class II aaRS and biotin synthetases"/>
    <property type="match status" value="1"/>
</dbReference>
<dbReference type="PROSITE" id="PS51733">
    <property type="entry name" value="BPL_LPL_CATALYTIC"/>
    <property type="match status" value="1"/>
</dbReference>
<reference key="1">
    <citation type="journal article" date="2002" name="J. Biol. Chem.">
        <title>Molecular characterization of a second copy of holocarboxylase synthetase gene (hcs2) in Arabidopsis thaliana.</title>
        <authorList>
            <person name="Denis L."/>
            <person name="Grossemy M."/>
            <person name="Douce R."/>
            <person name="Alban C."/>
        </authorList>
    </citation>
    <scope>NUCLEOTIDE SEQUENCE [MRNA] (ISOFORMS 1 AND 2)</scope>
    <scope>TISSUE SPECIFICITY</scope>
    <source>
        <strain>cv. Wassilewskija</strain>
    </source>
</reference>
<reference key="2">
    <citation type="journal article" date="2000" name="Nature">
        <title>Sequence and analysis of chromosome 1 of the plant Arabidopsis thaliana.</title>
        <authorList>
            <person name="Theologis A."/>
            <person name="Ecker J.R."/>
            <person name="Palm C.J."/>
            <person name="Federspiel N.A."/>
            <person name="Kaul S."/>
            <person name="White O."/>
            <person name="Alonso J."/>
            <person name="Altafi H."/>
            <person name="Araujo R."/>
            <person name="Bowman C.L."/>
            <person name="Brooks S.Y."/>
            <person name="Buehler E."/>
            <person name="Chan A."/>
            <person name="Chao Q."/>
            <person name="Chen H."/>
            <person name="Cheuk R.F."/>
            <person name="Chin C.W."/>
            <person name="Chung M.K."/>
            <person name="Conn L."/>
            <person name="Conway A.B."/>
            <person name="Conway A.R."/>
            <person name="Creasy T.H."/>
            <person name="Dewar K."/>
            <person name="Dunn P."/>
            <person name="Etgu P."/>
            <person name="Feldblyum T.V."/>
            <person name="Feng J.-D."/>
            <person name="Fong B."/>
            <person name="Fujii C.Y."/>
            <person name="Gill J.E."/>
            <person name="Goldsmith A.D."/>
            <person name="Haas B."/>
            <person name="Hansen N.F."/>
            <person name="Hughes B."/>
            <person name="Huizar L."/>
            <person name="Hunter J.L."/>
            <person name="Jenkins J."/>
            <person name="Johnson-Hopson C."/>
            <person name="Khan S."/>
            <person name="Khaykin E."/>
            <person name="Kim C.J."/>
            <person name="Koo H.L."/>
            <person name="Kremenetskaia I."/>
            <person name="Kurtz D.B."/>
            <person name="Kwan A."/>
            <person name="Lam B."/>
            <person name="Langin-Hooper S."/>
            <person name="Lee A."/>
            <person name="Lee J.M."/>
            <person name="Lenz C.A."/>
            <person name="Li J.H."/>
            <person name="Li Y.-P."/>
            <person name="Lin X."/>
            <person name="Liu S.X."/>
            <person name="Liu Z.A."/>
            <person name="Luros J.S."/>
            <person name="Maiti R."/>
            <person name="Marziali A."/>
            <person name="Militscher J."/>
            <person name="Miranda M."/>
            <person name="Nguyen M."/>
            <person name="Nierman W.C."/>
            <person name="Osborne B.I."/>
            <person name="Pai G."/>
            <person name="Peterson J."/>
            <person name="Pham P.K."/>
            <person name="Rizzo M."/>
            <person name="Rooney T."/>
            <person name="Rowley D."/>
            <person name="Sakano H."/>
            <person name="Salzberg S.L."/>
            <person name="Schwartz J.R."/>
            <person name="Shinn P."/>
            <person name="Southwick A.M."/>
            <person name="Sun H."/>
            <person name="Tallon L.J."/>
            <person name="Tambunga G."/>
            <person name="Toriumi M.J."/>
            <person name="Town C.D."/>
            <person name="Utterback T."/>
            <person name="Van Aken S."/>
            <person name="Vaysberg M."/>
            <person name="Vysotskaia V.S."/>
            <person name="Walker M."/>
            <person name="Wu D."/>
            <person name="Yu G."/>
            <person name="Fraser C.M."/>
            <person name="Venter J.C."/>
            <person name="Davis R.W."/>
        </authorList>
    </citation>
    <scope>NUCLEOTIDE SEQUENCE [LARGE SCALE GENOMIC DNA]</scope>
    <source>
        <strain>cv. Columbia</strain>
    </source>
</reference>
<reference key="3">
    <citation type="journal article" date="2017" name="Plant J.">
        <title>Araport11: a complete reannotation of the Arabidopsis thaliana reference genome.</title>
        <authorList>
            <person name="Cheng C.Y."/>
            <person name="Krishnakumar V."/>
            <person name="Chan A.P."/>
            <person name="Thibaud-Nissen F."/>
            <person name="Schobel S."/>
            <person name="Town C.D."/>
        </authorList>
    </citation>
    <scope>GENOME REANNOTATION</scope>
    <source>
        <strain>cv. Columbia</strain>
    </source>
</reference>
<reference key="4">
    <citation type="journal article" date="2008" name="Plant Physiol.">
        <title>Dual targeting of Arabidopsis holocarboxylase synthetase1: a small upstream open reading frame regulates translation initiation and protein targeting.</title>
        <authorList>
            <person name="Puyaubert J."/>
            <person name="Denis L."/>
            <person name="Alban C."/>
        </authorList>
    </citation>
    <scope>FUNCTION</scope>
    <scope>DISRUPTION PHENOTYPE</scope>
</reference>
<keyword id="KW-0025">Alternative splicing</keyword>
<keyword id="KW-0963">Cytoplasm</keyword>
<keyword id="KW-0436">Ligase</keyword>
<keyword id="KW-1185">Reference proteome</keyword>
<organism>
    <name type="scientific">Arabidopsis thaliana</name>
    <name type="common">Mouse-ear cress</name>
    <dbReference type="NCBI Taxonomy" id="3702"/>
    <lineage>
        <taxon>Eukaryota</taxon>
        <taxon>Viridiplantae</taxon>
        <taxon>Streptophyta</taxon>
        <taxon>Embryophyta</taxon>
        <taxon>Tracheophyta</taxon>
        <taxon>Spermatophyta</taxon>
        <taxon>Magnoliopsida</taxon>
        <taxon>eudicotyledons</taxon>
        <taxon>Gunneridae</taxon>
        <taxon>Pentapetalae</taxon>
        <taxon>rosids</taxon>
        <taxon>malvids</taxon>
        <taxon>Brassicales</taxon>
        <taxon>Brassicaceae</taxon>
        <taxon>Camelineae</taxon>
        <taxon>Arabidopsis</taxon>
    </lineage>
</organism>
<accession>F4I4W2</accession>
<accession>Q8S4V5</accession>
<accession>Q8S4V7</accession>
<accession>Q9SHR6</accession>
<gene>
    <name type="primary">HCS2</name>
    <name type="ordered locus">At1g37150</name>
    <name type="ORF">F28L22.1</name>
</gene>
<feature type="chain" id="PRO_0000425973" description="Biotin--protein ligase 2">
    <location>
        <begin position="1"/>
        <end position="329"/>
    </location>
</feature>
<feature type="domain" description="BPL/LPL catalytic" evidence="2">
    <location>
        <begin position="67"/>
        <end position="251"/>
    </location>
</feature>
<feature type="binding site" evidence="1">
    <location>
        <begin position="84"/>
        <end position="85"/>
    </location>
    <ligand>
        <name>biotin</name>
        <dbReference type="ChEBI" id="CHEBI:57586"/>
    </ligand>
</feature>
<feature type="binding site" evidence="1">
    <location>
        <position position="107"/>
    </location>
    <ligand>
        <name>biotin</name>
        <dbReference type="ChEBI" id="CHEBI:57586"/>
    </ligand>
</feature>
<feature type="binding site" evidence="1">
    <location>
        <begin position="111"/>
        <end position="113"/>
    </location>
    <ligand>
        <name>biotin</name>
        <dbReference type="ChEBI" id="CHEBI:57586"/>
    </ligand>
</feature>
<feature type="binding site" evidence="1">
    <location>
        <position position="182"/>
    </location>
    <ligand>
        <name>biotin</name>
        <dbReference type="ChEBI" id="CHEBI:57586"/>
    </ligand>
</feature>
<feature type="splice variant" id="VSP_053917" description="In isoform 2." evidence="5">
    <original>GLTSSG</original>
    <variation>LLEMTM</variation>
    <location>
        <begin position="292"/>
        <end position="297"/>
    </location>
</feature>
<feature type="splice variant" id="VSP_053918" description="In isoform 2." evidence="5">
    <location>
        <begin position="298"/>
        <end position="329"/>
    </location>
</feature>
<feature type="sequence conflict" description="In Ref. 1; AAL93109." evidence="6" ref="1">
    <original>W</original>
    <variation>C</variation>
    <location>
        <position position="266"/>
    </location>
</feature>
<feature type="sequence conflict" description="In Ref. 1; AAL93109." evidence="6" ref="1">
    <original>R</original>
    <variation>K</variation>
    <location>
        <position position="272"/>
    </location>
</feature>
<feature type="sequence conflict" description="In Ref. 1; AAL93109." evidence="6" ref="1">
    <original>V</original>
    <variation>I</variation>
    <location>
        <position position="307"/>
    </location>
</feature>
<protein>
    <recommendedName>
        <fullName>Biotin--protein ligase 2</fullName>
        <ecNumber>6.3.4.-</ecNumber>
    </recommendedName>
    <alternativeName>
        <fullName>Holocarboxylase synthetase 2</fullName>
    </alternativeName>
</protein>